<accession>B1VKI4</accession>
<evidence type="ECO:0000255" key="1">
    <source>
        <dbReference type="HAMAP-Rule" id="MF_00491"/>
    </source>
</evidence>
<feature type="chain" id="PRO_0000343281" description="NAD(P)H-quinone oxidoreductase chain 4, chloroplastic">
    <location>
        <begin position="1"/>
        <end position="499"/>
    </location>
</feature>
<feature type="transmembrane region" description="Helical" evidence="1">
    <location>
        <begin position="4"/>
        <end position="24"/>
    </location>
</feature>
<feature type="transmembrane region" description="Helical" evidence="1">
    <location>
        <begin position="31"/>
        <end position="51"/>
    </location>
</feature>
<feature type="transmembrane region" description="Helical" evidence="1">
    <location>
        <begin position="87"/>
        <end position="107"/>
    </location>
</feature>
<feature type="transmembrane region" description="Helical" evidence="1">
    <location>
        <begin position="113"/>
        <end position="130"/>
    </location>
</feature>
<feature type="transmembrane region" description="Helical" evidence="1">
    <location>
        <begin position="134"/>
        <end position="154"/>
    </location>
</feature>
<feature type="transmembrane region" description="Helical" evidence="1">
    <location>
        <begin position="167"/>
        <end position="187"/>
    </location>
</feature>
<feature type="transmembrane region" description="Helical" evidence="1">
    <location>
        <begin position="211"/>
        <end position="231"/>
    </location>
</feature>
<feature type="transmembrane region" description="Helical" evidence="1">
    <location>
        <begin position="242"/>
        <end position="262"/>
    </location>
</feature>
<feature type="transmembrane region" description="Helical" evidence="1">
    <location>
        <begin position="274"/>
        <end position="294"/>
    </location>
</feature>
<feature type="transmembrane region" description="Helical" evidence="1">
    <location>
        <begin position="305"/>
        <end position="325"/>
    </location>
</feature>
<feature type="transmembrane region" description="Helical" evidence="1">
    <location>
        <begin position="330"/>
        <end position="350"/>
    </location>
</feature>
<feature type="transmembrane region" description="Helical" evidence="1">
    <location>
        <begin position="386"/>
        <end position="406"/>
    </location>
</feature>
<feature type="transmembrane region" description="Helical" evidence="1">
    <location>
        <begin position="416"/>
        <end position="436"/>
    </location>
</feature>
<feature type="transmembrane region" description="Helical" evidence="1">
    <location>
        <begin position="462"/>
        <end position="482"/>
    </location>
</feature>
<name>NU4C_CRYJA</name>
<keyword id="KW-0150">Chloroplast</keyword>
<keyword id="KW-0472">Membrane</keyword>
<keyword id="KW-0520">NAD</keyword>
<keyword id="KW-0521">NADP</keyword>
<keyword id="KW-0934">Plastid</keyword>
<keyword id="KW-0618">Plastoquinone</keyword>
<keyword id="KW-0874">Quinone</keyword>
<keyword id="KW-0793">Thylakoid</keyword>
<keyword id="KW-1278">Translocase</keyword>
<keyword id="KW-0812">Transmembrane</keyword>
<keyword id="KW-1133">Transmembrane helix</keyword>
<sequence>MSNLPWLTIIVILPISAGLLIPLFPHKGNKMIRWYTLGICLLDLLLMTYIFRYHYHFDNSLIQLEEDYNWINLIHFHWKLGIDGFSIGLILLTGFVTTLATLAAWPVTRNPRLLHFLMLAMYSGQLGLFASRDILLFFLMWELELIPVYLLLSMWGGKRRLYSATKFLLYTAGGSIFILMGALSMGLYGSHGPTFDFELLAKKDYPITLEILLYLGFLIAYAIKLPIFPLHTWLPDTHGEAHYSTCMLLAGVLLKMGGYGLIRINMELLPHAHSLFSPWLIIIGAVQIIYAALTSMGQRNLKRRIAYSSISHMGFVIIGIGSMTYTGLNGAILQMISHGLIGAALFFLVGTSYDRIRTLFLDEMGGIAIPIPKIFTMFSSFSMASLALPGMSGFVAEFMIFLGVITNHKYSSTFRIIITAIAAIGMILTPIYLLSMLRRMFYGYKVLNVPNPYFKDSGPRELFILICLFLPIIGIGLYPDLVLFLYNAKVEAIFSQSFY</sequence>
<dbReference type="EC" id="7.1.1.-" evidence="1"/>
<dbReference type="EMBL" id="AP009377">
    <property type="protein sequence ID" value="BAG16695.1"/>
    <property type="molecule type" value="Genomic_DNA"/>
</dbReference>
<dbReference type="RefSeq" id="YP_001806697.1">
    <property type="nucleotide sequence ID" value="NC_010548.1"/>
</dbReference>
<dbReference type="SMR" id="B1VKI4"/>
<dbReference type="GeneID" id="6166572"/>
<dbReference type="KEGG" id="cjf:6166572"/>
<dbReference type="OrthoDB" id="564260at2759"/>
<dbReference type="GO" id="GO:0009535">
    <property type="term" value="C:chloroplast thylakoid membrane"/>
    <property type="evidence" value="ECO:0007669"/>
    <property type="project" value="UniProtKB-SubCell"/>
</dbReference>
<dbReference type="GO" id="GO:0008137">
    <property type="term" value="F:NADH dehydrogenase (ubiquinone) activity"/>
    <property type="evidence" value="ECO:0007669"/>
    <property type="project" value="InterPro"/>
</dbReference>
<dbReference type="GO" id="GO:0048039">
    <property type="term" value="F:ubiquinone binding"/>
    <property type="evidence" value="ECO:0007669"/>
    <property type="project" value="TreeGrafter"/>
</dbReference>
<dbReference type="GO" id="GO:0042773">
    <property type="term" value="P:ATP synthesis coupled electron transport"/>
    <property type="evidence" value="ECO:0007669"/>
    <property type="project" value="InterPro"/>
</dbReference>
<dbReference type="GO" id="GO:0015990">
    <property type="term" value="P:electron transport coupled proton transport"/>
    <property type="evidence" value="ECO:0007669"/>
    <property type="project" value="TreeGrafter"/>
</dbReference>
<dbReference type="HAMAP" id="MF_00491">
    <property type="entry name" value="NDH1_NuoM"/>
    <property type="match status" value="1"/>
</dbReference>
<dbReference type="InterPro" id="IPR022997">
    <property type="entry name" value="NADH_Q_OxRdtase_chain4"/>
</dbReference>
<dbReference type="InterPro" id="IPR010227">
    <property type="entry name" value="NADH_Q_OxRdtase_chainM/4"/>
</dbReference>
<dbReference type="InterPro" id="IPR003918">
    <property type="entry name" value="NADH_UbQ_OxRdtase"/>
</dbReference>
<dbReference type="InterPro" id="IPR001750">
    <property type="entry name" value="ND/Mrp_TM"/>
</dbReference>
<dbReference type="NCBIfam" id="TIGR01972">
    <property type="entry name" value="NDH_I_M"/>
    <property type="match status" value="1"/>
</dbReference>
<dbReference type="NCBIfam" id="NF009212">
    <property type="entry name" value="PRK12561.1"/>
    <property type="match status" value="1"/>
</dbReference>
<dbReference type="PANTHER" id="PTHR43507:SF21">
    <property type="entry name" value="NAD(P)H-QUINONE OXIDOREDUCTASE CHAIN 4, CHLOROPLASTIC"/>
    <property type="match status" value="1"/>
</dbReference>
<dbReference type="PANTHER" id="PTHR43507">
    <property type="entry name" value="NADH-UBIQUINONE OXIDOREDUCTASE CHAIN 4"/>
    <property type="match status" value="1"/>
</dbReference>
<dbReference type="Pfam" id="PF00361">
    <property type="entry name" value="Proton_antipo_M"/>
    <property type="match status" value="1"/>
</dbReference>
<dbReference type="PRINTS" id="PR01437">
    <property type="entry name" value="NUOXDRDTASE4"/>
</dbReference>
<reference key="1">
    <citation type="journal article" date="2008" name="BMC Plant Biol.">
        <title>Complete nucleotide sequence of the Cryptomeria japonica D. Don. chloroplast genome and comparative chloroplast genomics: diversified genomic structure of coniferous species.</title>
        <authorList>
            <person name="Hirao T."/>
            <person name="Watanabe A."/>
            <person name="Kurita M."/>
            <person name="Kondo T."/>
            <person name="Takata K."/>
        </authorList>
    </citation>
    <scope>NUCLEOTIDE SEQUENCE [LARGE SCALE GENOMIC DNA]</scope>
</reference>
<gene>
    <name evidence="1" type="primary">ndhD</name>
</gene>
<organism>
    <name type="scientific">Cryptomeria japonica</name>
    <name type="common">Japanese cedar</name>
    <name type="synonym">Cupressus japonica</name>
    <dbReference type="NCBI Taxonomy" id="3369"/>
    <lineage>
        <taxon>Eukaryota</taxon>
        <taxon>Viridiplantae</taxon>
        <taxon>Streptophyta</taxon>
        <taxon>Embryophyta</taxon>
        <taxon>Tracheophyta</taxon>
        <taxon>Spermatophyta</taxon>
        <taxon>Pinopsida</taxon>
        <taxon>Pinidae</taxon>
        <taxon>Conifers II</taxon>
        <taxon>Cupressales</taxon>
        <taxon>Cupressaceae</taxon>
        <taxon>Cryptomeria</taxon>
    </lineage>
</organism>
<proteinExistence type="inferred from homology"/>
<geneLocation type="chloroplast"/>
<protein>
    <recommendedName>
        <fullName evidence="1">NAD(P)H-quinone oxidoreductase chain 4, chloroplastic</fullName>
        <ecNumber evidence="1">7.1.1.-</ecNumber>
    </recommendedName>
    <alternativeName>
        <fullName evidence="1">NAD(P)H dehydrogenase, chain 4</fullName>
    </alternativeName>
    <alternativeName>
        <fullName evidence="1">NADH-plastoquinone oxidoreductase chain 4</fullName>
    </alternativeName>
</protein>
<comment type="catalytic activity">
    <reaction evidence="1">
        <text>a plastoquinone + NADH + (n+1) H(+)(in) = a plastoquinol + NAD(+) + n H(+)(out)</text>
        <dbReference type="Rhea" id="RHEA:42608"/>
        <dbReference type="Rhea" id="RHEA-COMP:9561"/>
        <dbReference type="Rhea" id="RHEA-COMP:9562"/>
        <dbReference type="ChEBI" id="CHEBI:15378"/>
        <dbReference type="ChEBI" id="CHEBI:17757"/>
        <dbReference type="ChEBI" id="CHEBI:57540"/>
        <dbReference type="ChEBI" id="CHEBI:57945"/>
        <dbReference type="ChEBI" id="CHEBI:62192"/>
    </reaction>
</comment>
<comment type="catalytic activity">
    <reaction evidence="1">
        <text>a plastoquinone + NADPH + (n+1) H(+)(in) = a plastoquinol + NADP(+) + n H(+)(out)</text>
        <dbReference type="Rhea" id="RHEA:42612"/>
        <dbReference type="Rhea" id="RHEA-COMP:9561"/>
        <dbReference type="Rhea" id="RHEA-COMP:9562"/>
        <dbReference type="ChEBI" id="CHEBI:15378"/>
        <dbReference type="ChEBI" id="CHEBI:17757"/>
        <dbReference type="ChEBI" id="CHEBI:57783"/>
        <dbReference type="ChEBI" id="CHEBI:58349"/>
        <dbReference type="ChEBI" id="CHEBI:62192"/>
    </reaction>
</comment>
<comment type="subcellular location">
    <subcellularLocation>
        <location evidence="1">Plastid</location>
        <location evidence="1">Chloroplast thylakoid membrane</location>
        <topology evidence="1">Multi-pass membrane protein</topology>
    </subcellularLocation>
</comment>
<comment type="similarity">
    <text evidence="1">Belongs to the complex I subunit 4 family.</text>
</comment>